<feature type="chain" id="PRO_0000200110" description="Homeobox protein Hox-B1a">
    <location>
        <begin position="1"/>
        <end position="311"/>
    </location>
</feature>
<feature type="DNA-binding region" description="Homeobox" evidence="2">
    <location>
        <begin position="217"/>
        <end position="276"/>
    </location>
</feature>
<feature type="region of interest" description="Disordered" evidence="3">
    <location>
        <begin position="267"/>
        <end position="311"/>
    </location>
</feature>
<feature type="compositionally biased region" description="Low complexity" evidence="3">
    <location>
        <begin position="298"/>
        <end position="311"/>
    </location>
</feature>
<feature type="sequence conflict" description="In Ref. 1; AAD15944." evidence="5" ref="1">
    <original>SFL</original>
    <variation>LSW</variation>
    <location>
        <begin position="3"/>
        <end position="5"/>
    </location>
</feature>
<feature type="sequence conflict" description="In Ref. 1; AAD15944." evidence="5" ref="1">
    <original>Q</original>
    <variation>R</variation>
    <location>
        <position position="65"/>
    </location>
</feature>
<dbReference type="EMBL" id="AF071251">
    <property type="protein sequence ID" value="AAD15944.1"/>
    <property type="status" value="ALT_INIT"/>
    <property type="molecule type" value="Genomic_DNA"/>
</dbReference>
<dbReference type="EMBL" id="AL645782">
    <property type="protein sequence ID" value="CAD59118.1"/>
    <property type="molecule type" value="Genomic_DNA"/>
</dbReference>
<dbReference type="EMBL" id="Y13950">
    <property type="protein sequence ID" value="CAA74288.1"/>
    <property type="molecule type" value="mRNA"/>
</dbReference>
<dbReference type="SMR" id="O42366"/>
<dbReference type="FunCoup" id="O42366">
    <property type="interactions" value="175"/>
</dbReference>
<dbReference type="STRING" id="7955.ENSDARP00000101854"/>
<dbReference type="PaxDb" id="7955-ENSDARP00000101854"/>
<dbReference type="AGR" id="ZFIN:ZDB-GENE-990415-101"/>
<dbReference type="ZFIN" id="ZDB-GENE-990415-101">
    <property type="gene designation" value="hoxb1a"/>
</dbReference>
<dbReference type="eggNOG" id="KOG0489">
    <property type="taxonomic scope" value="Eukaryota"/>
</dbReference>
<dbReference type="InParanoid" id="O42366"/>
<dbReference type="PRO" id="PR:O42366"/>
<dbReference type="Proteomes" id="UP000000437">
    <property type="component" value="Unplaced"/>
</dbReference>
<dbReference type="GO" id="GO:0005634">
    <property type="term" value="C:nucleus"/>
    <property type="evidence" value="ECO:0000318"/>
    <property type="project" value="GO_Central"/>
</dbReference>
<dbReference type="GO" id="GO:0000981">
    <property type="term" value="F:DNA-binding transcription factor activity, RNA polymerase II-specific"/>
    <property type="evidence" value="ECO:0000318"/>
    <property type="project" value="GO_Central"/>
</dbReference>
<dbReference type="GO" id="GO:0000978">
    <property type="term" value="F:RNA polymerase II cis-regulatory region sequence-specific DNA binding"/>
    <property type="evidence" value="ECO:0000318"/>
    <property type="project" value="GO_Central"/>
</dbReference>
<dbReference type="GO" id="GO:0043565">
    <property type="term" value="F:sequence-specific DNA binding"/>
    <property type="evidence" value="ECO:0000314"/>
    <property type="project" value="ZFIN"/>
</dbReference>
<dbReference type="GO" id="GO:0021535">
    <property type="term" value="P:cell migration in hindbrain"/>
    <property type="evidence" value="ECO:0000315"/>
    <property type="project" value="ZFIN"/>
</dbReference>
<dbReference type="GO" id="GO:0021561">
    <property type="term" value="P:facial nerve development"/>
    <property type="evidence" value="ECO:0000315"/>
    <property type="project" value="ZFIN"/>
</dbReference>
<dbReference type="GO" id="GO:0021754">
    <property type="term" value="P:facial nucleus development"/>
    <property type="evidence" value="ECO:0000315"/>
    <property type="project" value="ZFIN"/>
</dbReference>
<dbReference type="GO" id="GO:0021578">
    <property type="term" value="P:hindbrain maturation"/>
    <property type="evidence" value="ECO:0000315"/>
    <property type="project" value="ZFIN"/>
</dbReference>
<dbReference type="GO" id="GO:0006357">
    <property type="term" value="P:regulation of transcription by RNA polymerase II"/>
    <property type="evidence" value="ECO:0000318"/>
    <property type="project" value="GO_Central"/>
</dbReference>
<dbReference type="GO" id="GO:0021570">
    <property type="term" value="P:rhombomere 4 development"/>
    <property type="evidence" value="ECO:0000314"/>
    <property type="project" value="ZFIN"/>
</dbReference>
<dbReference type="GO" id="GO:0021661">
    <property type="term" value="P:rhombomere 4 morphogenesis"/>
    <property type="evidence" value="ECO:0000315"/>
    <property type="project" value="ZFIN"/>
</dbReference>
<dbReference type="CDD" id="cd00086">
    <property type="entry name" value="homeodomain"/>
    <property type="match status" value="1"/>
</dbReference>
<dbReference type="FunFam" id="1.10.10.60:FF:000113">
    <property type="entry name" value="homeobox protein Hox-B1"/>
    <property type="match status" value="1"/>
</dbReference>
<dbReference type="Gene3D" id="1.10.10.60">
    <property type="entry name" value="Homeodomain-like"/>
    <property type="match status" value="1"/>
</dbReference>
<dbReference type="InterPro" id="IPR001356">
    <property type="entry name" value="HD"/>
</dbReference>
<dbReference type="InterPro" id="IPR020479">
    <property type="entry name" value="HD_metazoa"/>
</dbReference>
<dbReference type="InterPro" id="IPR017970">
    <property type="entry name" value="Homeobox_CS"/>
</dbReference>
<dbReference type="InterPro" id="IPR009057">
    <property type="entry name" value="Homeodomain-like_sf"/>
</dbReference>
<dbReference type="InterPro" id="IPR046327">
    <property type="entry name" value="HXA1/B1/D1"/>
</dbReference>
<dbReference type="PANTHER" id="PTHR45946:SF5">
    <property type="entry name" value="HOMEOBOX PROTEIN HOX-B1"/>
    <property type="match status" value="1"/>
</dbReference>
<dbReference type="PANTHER" id="PTHR45946">
    <property type="entry name" value="HOMEOBOX PROTEIN ROUGH-RELATED"/>
    <property type="match status" value="1"/>
</dbReference>
<dbReference type="Pfam" id="PF00046">
    <property type="entry name" value="Homeodomain"/>
    <property type="match status" value="1"/>
</dbReference>
<dbReference type="PRINTS" id="PR00024">
    <property type="entry name" value="HOMEOBOX"/>
</dbReference>
<dbReference type="SMART" id="SM00389">
    <property type="entry name" value="HOX"/>
    <property type="match status" value="1"/>
</dbReference>
<dbReference type="SUPFAM" id="SSF46689">
    <property type="entry name" value="Homeodomain-like"/>
    <property type="match status" value="1"/>
</dbReference>
<dbReference type="PROSITE" id="PS00027">
    <property type="entry name" value="HOMEOBOX_1"/>
    <property type="match status" value="1"/>
</dbReference>
<dbReference type="PROSITE" id="PS50071">
    <property type="entry name" value="HOMEOBOX_2"/>
    <property type="match status" value="1"/>
</dbReference>
<reference key="1">
    <citation type="journal article" date="1998" name="Science">
        <title>Zebrafish hox clusters and vertebrate genome evolution.</title>
        <authorList>
            <person name="Amores A."/>
            <person name="Force A."/>
            <person name="Yan Y.-L."/>
            <person name="Joly L."/>
            <person name="Amemiya C."/>
            <person name="Fritz A."/>
            <person name="Ho R.K."/>
            <person name="Langeland J."/>
            <person name="Prince V.E."/>
            <person name="Wang Y.-L."/>
            <person name="Westerfield M."/>
            <person name="Ekker M."/>
            <person name="Postlethwait J.H."/>
        </authorList>
    </citation>
    <scope>NUCLEOTIDE SEQUENCE [GENOMIC DNA]</scope>
</reference>
<reference key="2">
    <citation type="journal article" date="2013" name="Nature">
        <title>The zebrafish reference genome sequence and its relationship to the human genome.</title>
        <authorList>
            <person name="Howe K."/>
            <person name="Clark M.D."/>
            <person name="Torroja C.F."/>
            <person name="Torrance J."/>
            <person name="Berthelot C."/>
            <person name="Muffato M."/>
            <person name="Collins J.E."/>
            <person name="Humphray S."/>
            <person name="McLaren K."/>
            <person name="Matthews L."/>
            <person name="McLaren S."/>
            <person name="Sealy I."/>
            <person name="Caccamo M."/>
            <person name="Churcher C."/>
            <person name="Scott C."/>
            <person name="Barrett J.C."/>
            <person name="Koch R."/>
            <person name="Rauch G.J."/>
            <person name="White S."/>
            <person name="Chow W."/>
            <person name="Kilian B."/>
            <person name="Quintais L.T."/>
            <person name="Guerra-Assuncao J.A."/>
            <person name="Zhou Y."/>
            <person name="Gu Y."/>
            <person name="Yen J."/>
            <person name="Vogel J.H."/>
            <person name="Eyre T."/>
            <person name="Redmond S."/>
            <person name="Banerjee R."/>
            <person name="Chi J."/>
            <person name="Fu B."/>
            <person name="Langley E."/>
            <person name="Maguire S.F."/>
            <person name="Laird G.K."/>
            <person name="Lloyd D."/>
            <person name="Kenyon E."/>
            <person name="Donaldson S."/>
            <person name="Sehra H."/>
            <person name="Almeida-King J."/>
            <person name="Loveland J."/>
            <person name="Trevanion S."/>
            <person name="Jones M."/>
            <person name="Quail M."/>
            <person name="Willey D."/>
            <person name="Hunt A."/>
            <person name="Burton J."/>
            <person name="Sims S."/>
            <person name="McLay K."/>
            <person name="Plumb B."/>
            <person name="Davis J."/>
            <person name="Clee C."/>
            <person name="Oliver K."/>
            <person name="Clark R."/>
            <person name="Riddle C."/>
            <person name="Elliot D."/>
            <person name="Threadgold G."/>
            <person name="Harden G."/>
            <person name="Ware D."/>
            <person name="Begum S."/>
            <person name="Mortimore B."/>
            <person name="Kerry G."/>
            <person name="Heath P."/>
            <person name="Phillimore B."/>
            <person name="Tracey A."/>
            <person name="Corby N."/>
            <person name="Dunn M."/>
            <person name="Johnson C."/>
            <person name="Wood J."/>
            <person name="Clark S."/>
            <person name="Pelan S."/>
            <person name="Griffiths G."/>
            <person name="Smith M."/>
            <person name="Glithero R."/>
            <person name="Howden P."/>
            <person name="Barker N."/>
            <person name="Lloyd C."/>
            <person name="Stevens C."/>
            <person name="Harley J."/>
            <person name="Holt K."/>
            <person name="Panagiotidis G."/>
            <person name="Lovell J."/>
            <person name="Beasley H."/>
            <person name="Henderson C."/>
            <person name="Gordon D."/>
            <person name="Auger K."/>
            <person name="Wright D."/>
            <person name="Collins J."/>
            <person name="Raisen C."/>
            <person name="Dyer L."/>
            <person name="Leung K."/>
            <person name="Robertson L."/>
            <person name="Ambridge K."/>
            <person name="Leongamornlert D."/>
            <person name="McGuire S."/>
            <person name="Gilderthorp R."/>
            <person name="Griffiths C."/>
            <person name="Manthravadi D."/>
            <person name="Nichol S."/>
            <person name="Barker G."/>
            <person name="Whitehead S."/>
            <person name="Kay M."/>
            <person name="Brown J."/>
            <person name="Murnane C."/>
            <person name="Gray E."/>
            <person name="Humphries M."/>
            <person name="Sycamore N."/>
            <person name="Barker D."/>
            <person name="Saunders D."/>
            <person name="Wallis J."/>
            <person name="Babbage A."/>
            <person name="Hammond S."/>
            <person name="Mashreghi-Mohammadi M."/>
            <person name="Barr L."/>
            <person name="Martin S."/>
            <person name="Wray P."/>
            <person name="Ellington A."/>
            <person name="Matthews N."/>
            <person name="Ellwood M."/>
            <person name="Woodmansey R."/>
            <person name="Clark G."/>
            <person name="Cooper J."/>
            <person name="Tromans A."/>
            <person name="Grafham D."/>
            <person name="Skuce C."/>
            <person name="Pandian R."/>
            <person name="Andrews R."/>
            <person name="Harrison E."/>
            <person name="Kimberley A."/>
            <person name="Garnett J."/>
            <person name="Fosker N."/>
            <person name="Hall R."/>
            <person name="Garner P."/>
            <person name="Kelly D."/>
            <person name="Bird C."/>
            <person name="Palmer S."/>
            <person name="Gehring I."/>
            <person name="Berger A."/>
            <person name="Dooley C.M."/>
            <person name="Ersan-Urun Z."/>
            <person name="Eser C."/>
            <person name="Geiger H."/>
            <person name="Geisler M."/>
            <person name="Karotki L."/>
            <person name="Kirn A."/>
            <person name="Konantz J."/>
            <person name="Konantz M."/>
            <person name="Oberlander M."/>
            <person name="Rudolph-Geiger S."/>
            <person name="Teucke M."/>
            <person name="Lanz C."/>
            <person name="Raddatz G."/>
            <person name="Osoegawa K."/>
            <person name="Zhu B."/>
            <person name="Rapp A."/>
            <person name="Widaa S."/>
            <person name="Langford C."/>
            <person name="Yang F."/>
            <person name="Schuster S.C."/>
            <person name="Carter N.P."/>
            <person name="Harrow J."/>
            <person name="Ning Z."/>
            <person name="Herrero J."/>
            <person name="Searle S.M."/>
            <person name="Enright A."/>
            <person name="Geisler R."/>
            <person name="Plasterk R.H."/>
            <person name="Lee C."/>
            <person name="Westerfield M."/>
            <person name="de Jong P.J."/>
            <person name="Zon L.I."/>
            <person name="Postlethwait J.H."/>
            <person name="Nusslein-Volhard C."/>
            <person name="Hubbard T.J."/>
            <person name="Roest Crollius H."/>
            <person name="Rogers J."/>
            <person name="Stemple D.L."/>
        </authorList>
    </citation>
    <scope>NUCLEOTIDE SEQUENCE [LARGE SCALE GENOMIC DNA]</scope>
    <source>
        <strain>Tuebingen</strain>
    </source>
</reference>
<reference key="3">
    <citation type="journal article" date="1998" name="Development">
        <title>Zebrafish hox genes: expression in the hindbrain region of wild-type and mutants of the segmentation gene, valentino.</title>
        <authorList>
            <person name="Prince V.E."/>
            <person name="Moens C.B."/>
            <person name="Kimmel C.B."/>
            <person name="Ho R.K."/>
        </authorList>
    </citation>
    <scope>NUCLEOTIDE SEQUENCE [MRNA] OF 252-311</scope>
    <scope>DEVELOPMENTAL STAGE</scope>
    <source>
        <tissue>Embryo</tissue>
    </source>
</reference>
<organism>
    <name type="scientific">Danio rerio</name>
    <name type="common">Zebrafish</name>
    <name type="synonym">Brachydanio rerio</name>
    <dbReference type="NCBI Taxonomy" id="7955"/>
    <lineage>
        <taxon>Eukaryota</taxon>
        <taxon>Metazoa</taxon>
        <taxon>Chordata</taxon>
        <taxon>Craniata</taxon>
        <taxon>Vertebrata</taxon>
        <taxon>Euteleostomi</taxon>
        <taxon>Actinopterygii</taxon>
        <taxon>Neopterygii</taxon>
        <taxon>Teleostei</taxon>
        <taxon>Ostariophysi</taxon>
        <taxon>Cypriniformes</taxon>
        <taxon>Danionidae</taxon>
        <taxon>Danioninae</taxon>
        <taxon>Danio</taxon>
    </lineage>
</organism>
<keyword id="KW-0217">Developmental protein</keyword>
<keyword id="KW-0238">DNA-binding</keyword>
<keyword id="KW-0371">Homeobox</keyword>
<keyword id="KW-0539">Nucleus</keyword>
<keyword id="KW-1185">Reference proteome</keyword>
<keyword id="KW-0804">Transcription</keyword>
<keyword id="KW-0805">Transcription regulation</keyword>
<comment type="function">
    <text evidence="1">Sequence-specific transcription factor which is part of a developmental regulatory system that provides cells with specific positional identities on the anterior-posterior axis.</text>
</comment>
<comment type="subcellular location">
    <subcellularLocation>
        <location evidence="2">Nucleus</location>
    </subcellularLocation>
</comment>
<comment type="developmental stage">
    <text evidence="4">First expressed at 80-100% epiboly with an anterior limit at the presumptive rhombomere 4 (r4) of the developing hindbrain. Continuous expression in, and posterior to r4 until the 1-somite stage. By the 3-somite stage, expression is up-regulated in r4 and down-regulated in r5 and r6. At the 10-somite stage, weak expression in and posterior to r7. By the 15-somite stage, expressed only in r4.</text>
</comment>
<comment type="similarity">
    <text evidence="5">Belongs to the Antp homeobox family. Labial subfamily.</text>
</comment>
<comment type="sequence caution" evidence="5">
    <conflict type="erroneous initiation">
        <sequence resource="EMBL-CDS" id="AAD15944"/>
    </conflict>
</comment>
<gene>
    <name type="primary">hoxb1a</name>
    <name type="synonym">hoxb1</name>
</gene>
<accession>O42366</accession>
<accession>Q8AWY4</accession>
<accession>Q9PWL8</accession>
<proteinExistence type="evidence at transcript level"/>
<evidence type="ECO:0000250" key="1"/>
<evidence type="ECO:0000255" key="2">
    <source>
        <dbReference type="PROSITE-ProRule" id="PRU00108"/>
    </source>
</evidence>
<evidence type="ECO:0000256" key="3">
    <source>
        <dbReference type="SAM" id="MobiDB-lite"/>
    </source>
</evidence>
<evidence type="ECO:0000269" key="4">
    <source>
    </source>
</evidence>
<evidence type="ECO:0000305" key="5"/>
<sequence>MNSFLEYTICNRGTNAYSPKAGYHHLDQAFPGPFHTGHASDSYNADGRLYVGGSNQPPTAAAQHQHQNGIYAHHQHQNQTGMGLTYGGTGTTSYGTQACANSDYAQHQYFINPEQDGMYYHSSGFSTSNASPHYGSMAGAYCGAQGAVPAAPYQHHGCEGQDHQRAYSQGTYADLSASQGTEKDTDQPPPGKTFDWMKVKRNPPKTGKVAEYGLGPQNTIRTNFTTKQLTELEKEFHFSKYLTRARRVEIAATLELNETQVKIWFQNRRMKQKKREKEGLAPASSTSSKDLEDQSDHSTSTSPEASPSPDS</sequence>
<protein>
    <recommendedName>
        <fullName>Homeobox protein Hox-B1a</fullName>
        <shortName>Hox-B1</shortName>
    </recommendedName>
</protein>
<name>HXB1A_DANRE</name>